<protein>
    <recommendedName>
        <fullName>Putative nuclease OPG089</fullName>
        <ecNumber evidence="2">3.1.-.-</ecNumber>
    </recommendedName>
</protein>
<sequence length="434" mass="49925">MGIKNLKSLLLENKSLTILDDNLYKVYNGIFVDTMSIYIAVANCVRNLEELTTVFIKYVNGWVKKGGHVTLFIDRGSIKIKQDVRDKRRKYSKLTKDRKMLELEKCTSEIQNVTGFMEEEIKAEMQLKIDKLTFQIYLSDYDNIKISLNEILTHFNNNENVTLFYCDERDAEFVMCLEAKTQFSTTGEWPLIISTDQDTMLFASADNHPKMIKNLTQLFKFVPSAEDNYLAKLTALVNGCDFFPGLYGASITPNNLNKIQLFSDFTIDNIVTSLAIKNYYRKTNSTVDVRNIVTFINDYANLDDVYSYIPPCQCTVQEFIFSALDEKWNEFKSSYLESVPLPCQLMYALEPRKEIDVSEVKTLSSYIDFENTKSDIDVIKSISSIFGYSNENCNTIVFGIYKDNLLLSINNSFYFNDSLLITNTKSDNIINIGY</sequence>
<feature type="chain" id="PRO_0000457685" description="Putative nuclease OPG089">
    <location>
        <begin position="1"/>
        <end position="434"/>
    </location>
</feature>
<name>PG089_MONPV</name>
<organism>
    <name type="scientific">Monkeypox virus</name>
    <dbReference type="NCBI Taxonomy" id="10244"/>
    <lineage>
        <taxon>Viruses</taxon>
        <taxon>Varidnaviria</taxon>
        <taxon>Bamfordvirae</taxon>
        <taxon>Nucleocytoviricota</taxon>
        <taxon>Pokkesviricetes</taxon>
        <taxon>Chitovirales</taxon>
        <taxon>Poxviridae</taxon>
        <taxon>Chordopoxvirinae</taxon>
        <taxon>Orthopoxvirus</taxon>
    </lineage>
</organism>
<keyword id="KW-0227">DNA damage</keyword>
<keyword id="KW-0234">DNA repair</keyword>
<keyword id="KW-0244">Early protein</keyword>
<keyword id="KW-0378">Hydrolase</keyword>
<keyword id="KW-0460">Magnesium</keyword>
<keyword id="KW-0479">Metal-binding</keyword>
<keyword id="KW-0540">Nuclease</keyword>
<keyword id="KW-1185">Reference proteome</keyword>
<keyword id="KW-0946">Virion</keyword>
<proteinExistence type="inferred from homology"/>
<reference key="1">
    <citation type="journal article" date="2022" name="J. Infect. Dis.">
        <title>Exportation of Monkeypox virus from the African continent.</title>
        <authorList>
            <person name="Mauldin M.R."/>
            <person name="McCollum A.M."/>
            <person name="Nakazawa Y.J."/>
            <person name="Mandra A."/>
            <person name="Whitehouse E.R."/>
            <person name="Davidson W."/>
            <person name="Zhao H."/>
            <person name="Gao J."/>
            <person name="Li Y."/>
            <person name="Doty J."/>
            <person name="Yinka-Ogunleye A."/>
            <person name="Akinpelu A."/>
            <person name="Aruna O."/>
            <person name="Naidoo D."/>
            <person name="Lewandowski K."/>
            <person name="Afrough B."/>
            <person name="Graham V."/>
            <person name="Aarons E."/>
            <person name="Hewson R."/>
            <person name="Vipond R."/>
            <person name="Dunning J."/>
            <person name="Chand M."/>
            <person name="Brown C."/>
            <person name="Cohen-Gihon I."/>
            <person name="Erez N."/>
            <person name="Shifman O."/>
            <person name="Israeli O."/>
            <person name="Sharon M."/>
            <person name="Schwartz E."/>
            <person name="Beth-Din A."/>
            <person name="Zvi A."/>
            <person name="Mak T.M."/>
            <person name="Ng Y.K."/>
            <person name="Cui L."/>
            <person name="Lin R.T.P."/>
            <person name="Olson V.A."/>
            <person name="Brooks T."/>
            <person name="Paran N."/>
            <person name="Ihekweazu C."/>
            <person name="Reynolds M.G."/>
        </authorList>
    </citation>
    <scope>NUCLEOTIDE SEQUENCE [LARGE SCALE GENOMIC DNA]</scope>
    <source>
        <strain>MPXV-M5312_HM12_Rivers</strain>
    </source>
</reference>
<accession>A0A7H0DN61</accession>
<dbReference type="EC" id="3.1.-.-" evidence="2"/>
<dbReference type="EMBL" id="MT903340">
    <property type="protein sequence ID" value="QNP12944.1"/>
    <property type="molecule type" value="Genomic_DNA"/>
</dbReference>
<dbReference type="RefSeq" id="YP_010377071.1">
    <property type="nucleotide sequence ID" value="NC_063383.1"/>
</dbReference>
<dbReference type="GeneID" id="72551484"/>
<dbReference type="Proteomes" id="UP000516359">
    <property type="component" value="Genome"/>
</dbReference>
<dbReference type="GO" id="GO:0044423">
    <property type="term" value="C:virion component"/>
    <property type="evidence" value="ECO:0007669"/>
    <property type="project" value="UniProtKB-KW"/>
</dbReference>
<dbReference type="GO" id="GO:0046872">
    <property type="term" value="F:metal ion binding"/>
    <property type="evidence" value="ECO:0007669"/>
    <property type="project" value="UniProtKB-KW"/>
</dbReference>
<dbReference type="GO" id="GO:0004518">
    <property type="term" value="F:nuclease activity"/>
    <property type="evidence" value="ECO:0007669"/>
    <property type="project" value="UniProtKB-KW"/>
</dbReference>
<dbReference type="GO" id="GO:0006281">
    <property type="term" value="P:DNA repair"/>
    <property type="evidence" value="ECO:0007669"/>
    <property type="project" value="UniProtKB-KW"/>
</dbReference>
<dbReference type="CDD" id="cd18674">
    <property type="entry name" value="PIN_Pox_G5"/>
    <property type="match status" value="1"/>
</dbReference>
<dbReference type="InterPro" id="IPR007678">
    <property type="entry name" value="Poxvirus_G5"/>
</dbReference>
<dbReference type="Pfam" id="PF04599">
    <property type="entry name" value="Pox_G5"/>
    <property type="match status" value="1"/>
</dbReference>
<gene>
    <name type="primary">OPG089</name>
    <name type="ORF">MPXVgp074</name>
</gene>
<comment type="function">
    <text evidence="2">Putative nuclease that seems to be required for double-strand break repair, homologous recombination, and production of full-length viral genomic DNA.</text>
</comment>
<comment type="cofactor">
    <cofactor evidence="2">
        <name>Mg(2+)</name>
        <dbReference type="ChEBI" id="CHEBI:18420"/>
    </cofactor>
    <text evidence="1">Binds 2 magnesium ions per subunit. They probably participate in the reaction catalyzed by the enzyme.</text>
</comment>
<comment type="subcellular location">
    <subcellularLocation>
        <location evidence="2">Virion</location>
    </subcellularLocation>
    <text evidence="2">Present in the virion core.</text>
</comment>
<comment type="similarity">
    <text evidence="3">Belongs to the XPG/RAD2 endonuclease family. FEN1 subfamily.</text>
</comment>
<organismHost>
    <name type="scientific">Cynomys gunnisoni</name>
    <name type="common">Gunnison's prairie dog</name>
    <name type="synonym">Spermophilus gunnisoni</name>
    <dbReference type="NCBI Taxonomy" id="45479"/>
</organismHost>
<organismHost>
    <name type="scientific">Cynomys leucurus</name>
    <name type="common">White-tailed prairie dog</name>
    <dbReference type="NCBI Taxonomy" id="99825"/>
</organismHost>
<organismHost>
    <name type="scientific">Cynomys ludovicianus</name>
    <name type="common">Black-tailed prairie dog</name>
    <dbReference type="NCBI Taxonomy" id="45480"/>
</organismHost>
<organismHost>
    <name type="scientific">Cynomys mexicanus</name>
    <name type="common">Mexican prairie dog</name>
    <dbReference type="NCBI Taxonomy" id="99826"/>
</organismHost>
<organismHost>
    <name type="scientific">Cynomys parvidens</name>
    <name type="common">Utah prairie dog</name>
    <dbReference type="NCBI Taxonomy" id="99827"/>
</organismHost>
<organismHost>
    <name type="scientific">Gliridae</name>
    <name type="common">dormice</name>
    <dbReference type="NCBI Taxonomy" id="30650"/>
</organismHost>
<organismHost>
    <name type="scientific">Heliosciurus ruwenzorii</name>
    <name type="common">Ruwenzori sun squirrel</name>
    <dbReference type="NCBI Taxonomy" id="226685"/>
</organismHost>
<organismHost>
    <name type="scientific">Homo sapiens</name>
    <name type="common">Human</name>
    <dbReference type="NCBI Taxonomy" id="9606"/>
</organismHost>
<organismHost>
    <name type="scientific">Mus musculus</name>
    <name type="common">Mouse</name>
    <dbReference type="NCBI Taxonomy" id="10090"/>
</organismHost>
<evidence type="ECO:0000250" key="1"/>
<evidence type="ECO:0000250" key="2">
    <source>
        <dbReference type="UniProtKB" id="Q80HX0"/>
    </source>
</evidence>
<evidence type="ECO:0000305" key="3"/>